<evidence type="ECO:0000269" key="1">
    <source>
    </source>
</evidence>
<evidence type="ECO:0000269" key="2">
    <source>
    </source>
</evidence>
<evidence type="ECO:0000269" key="3">
    <source>
    </source>
</evidence>
<evidence type="ECO:0000269" key="4">
    <source>
    </source>
</evidence>
<evidence type="ECO:0000269" key="5">
    <source>
    </source>
</evidence>
<evidence type="ECO:0000305" key="6"/>
<evidence type="ECO:0007829" key="7">
    <source>
        <dbReference type="PDB" id="1ZFN"/>
    </source>
</evidence>
<evidence type="ECO:0007829" key="8">
    <source>
        <dbReference type="PDB" id="1ZUD"/>
    </source>
</evidence>
<proteinExistence type="evidence at protein level"/>
<feature type="chain" id="PRO_0000120578" description="Sulfur carrier protein ThiS adenylyltransferase">
    <location>
        <begin position="1"/>
        <end position="251"/>
    </location>
</feature>
<feature type="active site" description="Glycyl persulfide ester intermediate">
    <location>
        <position position="184"/>
    </location>
</feature>
<feature type="binding site">
    <location>
        <position position="11"/>
    </location>
    <ligand>
        <name>ATP</name>
        <dbReference type="ChEBI" id="CHEBI:30616"/>
    </ligand>
</feature>
<feature type="binding site">
    <location>
        <position position="38"/>
    </location>
    <ligand>
        <name>ATP</name>
        <dbReference type="ChEBI" id="CHEBI:30616"/>
    </ligand>
</feature>
<feature type="binding site">
    <location>
        <position position="59"/>
    </location>
    <ligand>
        <name>ATP</name>
        <dbReference type="ChEBI" id="CHEBI:30616"/>
    </ligand>
</feature>
<feature type="binding site">
    <location>
        <position position="70"/>
    </location>
    <ligand>
        <name>ATP</name>
        <dbReference type="ChEBI" id="CHEBI:30616"/>
    </ligand>
</feature>
<feature type="binding site">
    <location>
        <position position="83"/>
    </location>
    <ligand>
        <name>ATP</name>
        <dbReference type="ChEBI" id="CHEBI:30616"/>
    </ligand>
</feature>
<feature type="binding site">
    <location>
        <position position="107"/>
    </location>
    <ligand>
        <name>ATP</name>
        <dbReference type="ChEBI" id="CHEBI:30616"/>
    </ligand>
</feature>
<feature type="binding site">
    <location>
        <begin position="127"/>
        <end position="131"/>
    </location>
    <ligand>
        <name>ATP</name>
        <dbReference type="ChEBI" id="CHEBI:30616"/>
    </ligand>
</feature>
<feature type="binding site" evidence="4">
    <location>
        <position position="169"/>
    </location>
    <ligand>
        <name>Zn(2+)</name>
        <dbReference type="ChEBI" id="CHEBI:29105"/>
    </ligand>
</feature>
<feature type="binding site" evidence="4">
    <location>
        <position position="172"/>
    </location>
    <ligand>
        <name>Zn(2+)</name>
        <dbReference type="ChEBI" id="CHEBI:29105"/>
    </ligand>
</feature>
<feature type="binding site" evidence="4">
    <location>
        <position position="240"/>
    </location>
    <ligand>
        <name>Zn(2+)</name>
        <dbReference type="ChEBI" id="CHEBI:29105"/>
    </ligand>
</feature>
<feature type="binding site" evidence="4">
    <location>
        <position position="243"/>
    </location>
    <ligand>
        <name>Zn(2+)</name>
        <dbReference type="ChEBI" id="CHEBI:29105"/>
    </ligand>
</feature>
<feature type="cross-link" description="Glycyl cysteine dithioester (Cys-Gly) (interchain with G-Cter in ThiS)">
    <location>
        <position position="184"/>
    </location>
</feature>
<feature type="mutagenesis site" description="No adenylation of ThiS." evidence="3">
    <original>W</original>
    <variation>A</variation>
    <location>
        <position position="174"/>
    </location>
</feature>
<feature type="mutagenesis site" description="No cross-link formed with ThiS. No effect on ThiS thiocarboxylate formation in vitro. Does not support growth." evidence="2">
    <original>C</original>
    <variation>S</variation>
    <location>
        <position position="184"/>
    </location>
</feature>
<feature type="sequence conflict" description="In Ref. 1; AAB95618." evidence="6" ref="1">
    <original>WR</original>
    <variation>C</variation>
    <location>
        <begin position="229"/>
        <end position="230"/>
    </location>
</feature>
<feature type="helix" evidence="8">
    <location>
        <begin position="3"/>
        <end position="8"/>
    </location>
</feature>
<feature type="helix" evidence="8">
    <location>
        <begin position="10"/>
        <end position="13"/>
    </location>
</feature>
<feature type="turn" evidence="8">
    <location>
        <begin position="16"/>
        <end position="18"/>
    </location>
</feature>
<feature type="helix" evidence="8">
    <location>
        <begin position="19"/>
        <end position="27"/>
    </location>
</feature>
<feature type="strand" evidence="8">
    <location>
        <begin position="30"/>
        <end position="34"/>
    </location>
</feature>
<feature type="helix" evidence="8">
    <location>
        <begin position="40"/>
        <end position="49"/>
    </location>
</feature>
<feature type="strand" evidence="8">
    <location>
        <begin position="53"/>
        <end position="58"/>
    </location>
</feature>
<feature type="helix" evidence="8">
    <location>
        <begin position="65"/>
        <end position="67"/>
    </location>
</feature>
<feature type="turn" evidence="8">
    <location>
        <begin position="68"/>
        <end position="70"/>
    </location>
</feature>
<feature type="helix" evidence="8">
    <location>
        <begin position="76"/>
        <end position="78"/>
    </location>
</feature>
<feature type="helix" evidence="8">
    <location>
        <begin position="83"/>
        <end position="94"/>
    </location>
</feature>
<feature type="strand" evidence="8">
    <location>
        <begin position="98"/>
        <end position="103"/>
    </location>
</feature>
<feature type="helix" evidence="8">
    <location>
        <begin position="109"/>
        <end position="118"/>
    </location>
</feature>
<feature type="strand" evidence="8">
    <location>
        <begin position="120"/>
        <end position="124"/>
    </location>
</feature>
<feature type="helix" evidence="8">
    <location>
        <begin position="129"/>
        <end position="141"/>
    </location>
</feature>
<feature type="strand" evidence="8">
    <location>
        <begin position="146"/>
        <end position="153"/>
    </location>
</feature>
<feature type="strand" evidence="8">
    <location>
        <begin position="155"/>
        <end position="161"/>
    </location>
</feature>
<feature type="helix" evidence="8">
    <location>
        <begin position="170"/>
        <end position="173"/>
    </location>
</feature>
<feature type="strand" evidence="7">
    <location>
        <begin position="176"/>
        <end position="178"/>
    </location>
</feature>
<feature type="helix" evidence="8">
    <location>
        <begin position="191"/>
        <end position="210"/>
    </location>
</feature>
<feature type="strand" evidence="8">
    <location>
        <begin position="217"/>
        <end position="223"/>
    </location>
</feature>
<feature type="turn" evidence="8">
    <location>
        <begin position="224"/>
        <end position="227"/>
    </location>
</feature>
<feature type="strand" evidence="8">
    <location>
        <begin position="228"/>
        <end position="233"/>
    </location>
</feature>
<feature type="turn" evidence="8">
    <location>
        <begin position="241"/>
        <end position="243"/>
    </location>
</feature>
<protein>
    <recommendedName>
        <fullName>Sulfur carrier protein ThiS adenylyltransferase</fullName>
        <ecNumber>2.7.7.73</ecNumber>
    </recommendedName>
</protein>
<name>THIF_ECOLI</name>
<dbReference type="EC" id="2.7.7.73"/>
<dbReference type="EMBL" id="M88701">
    <property type="protein sequence ID" value="AAB95618.1"/>
    <property type="molecule type" value="Genomic_DNA"/>
</dbReference>
<dbReference type="EMBL" id="U00006">
    <property type="protein sequence ID" value="AAC43090.1"/>
    <property type="status" value="ALT_INIT"/>
    <property type="molecule type" value="Genomic_DNA"/>
</dbReference>
<dbReference type="EMBL" id="U00096">
    <property type="protein sequence ID" value="AAC76966.2"/>
    <property type="molecule type" value="Genomic_DNA"/>
</dbReference>
<dbReference type="EMBL" id="AP009048">
    <property type="protein sequence ID" value="BAE77327.1"/>
    <property type="molecule type" value="Genomic_DNA"/>
</dbReference>
<dbReference type="PIR" id="C65206">
    <property type="entry name" value="C65206"/>
</dbReference>
<dbReference type="RefSeq" id="NP_418420.4">
    <property type="nucleotide sequence ID" value="NC_000913.3"/>
</dbReference>
<dbReference type="RefSeq" id="WP_000999737.1">
    <property type="nucleotide sequence ID" value="NZ_STEB01000045.1"/>
</dbReference>
<dbReference type="PDB" id="1ZFN">
    <property type="method" value="X-ray"/>
    <property type="resolution" value="2.75 A"/>
    <property type="chains" value="A/B/C/D=1-251"/>
</dbReference>
<dbReference type="PDB" id="1ZKM">
    <property type="method" value="X-ray"/>
    <property type="resolution" value="2.95 A"/>
    <property type="chains" value="A/B/C/D=1-251"/>
</dbReference>
<dbReference type="PDB" id="1ZUD">
    <property type="method" value="X-ray"/>
    <property type="resolution" value="1.98 A"/>
    <property type="chains" value="1/3=1-251"/>
</dbReference>
<dbReference type="PDBsum" id="1ZFN"/>
<dbReference type="PDBsum" id="1ZKM"/>
<dbReference type="PDBsum" id="1ZUD"/>
<dbReference type="SMR" id="P30138"/>
<dbReference type="BioGRID" id="4262657">
    <property type="interactions" value="16"/>
</dbReference>
<dbReference type="BioGRID" id="852794">
    <property type="interactions" value="2"/>
</dbReference>
<dbReference type="ComplexPortal" id="CPX-2134">
    <property type="entry name" value="ThiF-ThiS complex"/>
</dbReference>
<dbReference type="FunCoup" id="P30138">
    <property type="interactions" value="782"/>
</dbReference>
<dbReference type="IntAct" id="P30138">
    <property type="interactions" value="8"/>
</dbReference>
<dbReference type="STRING" id="511145.b3992"/>
<dbReference type="PaxDb" id="511145-b3992"/>
<dbReference type="EnsemblBacteria" id="AAC76966">
    <property type="protein sequence ID" value="AAC76966"/>
    <property type="gene ID" value="b3992"/>
</dbReference>
<dbReference type="GeneID" id="75205510"/>
<dbReference type="GeneID" id="948500"/>
<dbReference type="KEGG" id="ecj:JW3956"/>
<dbReference type="KEGG" id="eco:b3992"/>
<dbReference type="KEGG" id="ecoc:C3026_21565"/>
<dbReference type="PATRIC" id="fig|1411691.4.peg.2719"/>
<dbReference type="EchoBASE" id="EB1546"/>
<dbReference type="eggNOG" id="COG0476">
    <property type="taxonomic scope" value="Bacteria"/>
</dbReference>
<dbReference type="HOGENOM" id="CLU_013325_10_3_6"/>
<dbReference type="InParanoid" id="P30138"/>
<dbReference type="OMA" id="EFMRYSR"/>
<dbReference type="OrthoDB" id="9804286at2"/>
<dbReference type="PhylomeDB" id="P30138"/>
<dbReference type="BioCyc" id="EcoCyc:THIF-MONOMER"/>
<dbReference type="BioCyc" id="MetaCyc:THIF-MONOMER"/>
<dbReference type="BRENDA" id="2.7.7.73">
    <property type="organism ID" value="2026"/>
</dbReference>
<dbReference type="UniPathway" id="UPA00060"/>
<dbReference type="EvolutionaryTrace" id="P30138"/>
<dbReference type="PRO" id="PR:P30138"/>
<dbReference type="Proteomes" id="UP000000625">
    <property type="component" value="Chromosome"/>
</dbReference>
<dbReference type="GO" id="GO:1902503">
    <property type="term" value="C:adenylyltransferase complex"/>
    <property type="evidence" value="ECO:0000353"/>
    <property type="project" value="ComplexPortal"/>
</dbReference>
<dbReference type="GO" id="GO:0005737">
    <property type="term" value="C:cytoplasm"/>
    <property type="evidence" value="ECO:0000318"/>
    <property type="project" value="GO_Central"/>
</dbReference>
<dbReference type="GO" id="GO:0005829">
    <property type="term" value="C:cytosol"/>
    <property type="evidence" value="ECO:0000314"/>
    <property type="project" value="EcoCyc"/>
</dbReference>
<dbReference type="GO" id="GO:1990228">
    <property type="term" value="C:sulfurtransferase complex"/>
    <property type="evidence" value="ECO:0000303"/>
    <property type="project" value="ComplexPortal"/>
</dbReference>
<dbReference type="GO" id="GO:0070733">
    <property type="term" value="F:AMPylase activity"/>
    <property type="evidence" value="ECO:0000314"/>
    <property type="project" value="EcoCyc"/>
</dbReference>
<dbReference type="GO" id="GO:0005524">
    <property type="term" value="F:ATP binding"/>
    <property type="evidence" value="ECO:0007669"/>
    <property type="project" value="UniProtKB-KW"/>
</dbReference>
<dbReference type="GO" id="GO:0016779">
    <property type="term" value="F:nucleotidyltransferase activity"/>
    <property type="evidence" value="ECO:0000318"/>
    <property type="project" value="GO_Central"/>
</dbReference>
<dbReference type="GO" id="GO:0042803">
    <property type="term" value="F:protein homodimerization activity"/>
    <property type="evidence" value="ECO:0000314"/>
    <property type="project" value="EcoCyc"/>
</dbReference>
<dbReference type="GO" id="GO:0008146">
    <property type="term" value="F:sulfotransferase activity"/>
    <property type="evidence" value="ECO:0000318"/>
    <property type="project" value="GO_Central"/>
</dbReference>
<dbReference type="GO" id="GO:0004792">
    <property type="term" value="F:thiosulfate-cyanide sulfurtransferase activity"/>
    <property type="evidence" value="ECO:0000318"/>
    <property type="project" value="GO_Central"/>
</dbReference>
<dbReference type="GO" id="GO:0008641">
    <property type="term" value="F:ubiquitin-like modifier activating enzyme activity"/>
    <property type="evidence" value="ECO:0007669"/>
    <property type="project" value="InterPro"/>
</dbReference>
<dbReference type="GO" id="GO:0008270">
    <property type="term" value="F:zinc ion binding"/>
    <property type="evidence" value="ECO:0000314"/>
    <property type="project" value="EcoCyc"/>
</dbReference>
<dbReference type="GO" id="GO:0009228">
    <property type="term" value="P:thiamine biosynthetic process"/>
    <property type="evidence" value="ECO:0007669"/>
    <property type="project" value="UniProtKB-KW"/>
</dbReference>
<dbReference type="GO" id="GO:0009229">
    <property type="term" value="P:thiamine diphosphate biosynthetic process"/>
    <property type="evidence" value="ECO:0007669"/>
    <property type="project" value="UniProtKB-UniPathway"/>
</dbReference>
<dbReference type="GO" id="GO:0052837">
    <property type="term" value="P:thiazole biosynthetic process"/>
    <property type="evidence" value="ECO:0000315"/>
    <property type="project" value="EcoCyc"/>
</dbReference>
<dbReference type="CDD" id="cd00757">
    <property type="entry name" value="ThiF_MoeB_HesA_family"/>
    <property type="match status" value="1"/>
</dbReference>
<dbReference type="FunFam" id="3.40.50.720:FF:000080">
    <property type="entry name" value="Thiazole biosynthesis adenylyltransferase ThiF"/>
    <property type="match status" value="1"/>
</dbReference>
<dbReference type="Gene3D" id="3.40.50.720">
    <property type="entry name" value="NAD(P)-binding Rossmann-like Domain"/>
    <property type="match status" value="1"/>
</dbReference>
<dbReference type="InterPro" id="IPR012731">
    <property type="entry name" value="Adenyl_ThiF"/>
</dbReference>
<dbReference type="InterPro" id="IPR045886">
    <property type="entry name" value="ThiF/MoeB/HesA"/>
</dbReference>
<dbReference type="InterPro" id="IPR000594">
    <property type="entry name" value="ThiF_NAD_FAD-bd"/>
</dbReference>
<dbReference type="InterPro" id="IPR035985">
    <property type="entry name" value="Ubiquitin-activating_enz"/>
</dbReference>
<dbReference type="NCBIfam" id="TIGR02356">
    <property type="entry name" value="adenyl_thiF"/>
    <property type="match status" value="1"/>
</dbReference>
<dbReference type="NCBIfam" id="NF004281">
    <property type="entry name" value="PRK05690.1"/>
    <property type="match status" value="1"/>
</dbReference>
<dbReference type="PANTHER" id="PTHR10953:SF240">
    <property type="entry name" value="SULFUR CARRIER PROTEIN THIS ADENYLYLTRANSFERASE"/>
    <property type="match status" value="1"/>
</dbReference>
<dbReference type="PANTHER" id="PTHR10953">
    <property type="entry name" value="UBIQUITIN-ACTIVATING ENZYME E1"/>
    <property type="match status" value="1"/>
</dbReference>
<dbReference type="Pfam" id="PF00899">
    <property type="entry name" value="ThiF"/>
    <property type="match status" value="1"/>
</dbReference>
<dbReference type="SUPFAM" id="SSF69572">
    <property type="entry name" value="Activating enzymes of the ubiquitin-like proteins"/>
    <property type="match status" value="1"/>
</dbReference>
<sequence>MNDRDFMRYSRQILLDDIALDGQQKLLDSQVLIIGLGGLGTPAALYLAGAGVGTLVLADDDDVHLSNLQRQILFTTEDIDRPKSQVSQQRLTQLNPDIQLTALQQRLTGEALKDAVARADVVLDCTDNMATRQEINAACVALNTPLITASAVGFGGQLMVLTPPWEQGCYRCLWPDNQEPERNCRTAGVVGPVVGVMGTLQALEAIKLLSGIETPAGELRLFDGKSSQWRSLALRRASGCPVCGGSNADPV</sequence>
<organism>
    <name type="scientific">Escherichia coli (strain K12)</name>
    <dbReference type="NCBI Taxonomy" id="83333"/>
    <lineage>
        <taxon>Bacteria</taxon>
        <taxon>Pseudomonadati</taxon>
        <taxon>Pseudomonadota</taxon>
        <taxon>Gammaproteobacteria</taxon>
        <taxon>Enterobacterales</taxon>
        <taxon>Enterobacteriaceae</taxon>
        <taxon>Escherichia</taxon>
    </lineage>
</organism>
<gene>
    <name type="primary">thiF</name>
    <name type="ordered locus">b3992</name>
    <name type="ordered locus">JW3956</name>
</gene>
<comment type="function">
    <text>Catalyzes the adenylation by ATP of the carboxyl group of the C-terminal glycine of sulfur carrier protein ThiS.</text>
</comment>
<comment type="catalytic activity">
    <reaction evidence="5">
        <text>[ThiS sulfur-carrier protein]-C-terminal Gly-Gly + ATP + H(+) = [ThiS sulfur-carrier protein]-C-terminal Gly-Gly-AMP + diphosphate</text>
        <dbReference type="Rhea" id="RHEA:43344"/>
        <dbReference type="Rhea" id="RHEA-COMP:12909"/>
        <dbReference type="Rhea" id="RHEA-COMP:12910"/>
        <dbReference type="ChEBI" id="CHEBI:15378"/>
        <dbReference type="ChEBI" id="CHEBI:30616"/>
        <dbReference type="ChEBI" id="CHEBI:33019"/>
        <dbReference type="ChEBI" id="CHEBI:90618"/>
        <dbReference type="ChEBI" id="CHEBI:90778"/>
        <dbReference type="EC" id="2.7.7.73"/>
    </reaction>
</comment>
<comment type="cofactor">
    <cofactor evidence="3 4">
        <name>Zn(2+)</name>
        <dbReference type="ChEBI" id="CHEBI:29105"/>
    </cofactor>
    <text evidence="3 4">Binds 1 zinc ion per subunit.</text>
</comment>
<comment type="pathway">
    <text>Cofactor biosynthesis; thiamine diphosphate biosynthesis.</text>
</comment>
<comment type="subunit">
    <text evidence="3 4">Homodimer.</text>
</comment>
<comment type="mass spectrometry"/>
<comment type="similarity">
    <text evidence="6">Belongs to the HesA/MoeB/ThiF family.</text>
</comment>
<comment type="sequence caution" evidence="6">
    <conflict type="erroneous initiation">
        <sequence resource="EMBL-CDS" id="AAC43090"/>
    </conflict>
    <text>Truncated N-terminus.</text>
</comment>
<reference key="1">
    <citation type="journal article" date="1993" name="J. Bacteriol.">
        <title>Structural genes for thiamine biosynthetic enzymes (thiCEFGH) in Escherichia coli K-12.</title>
        <authorList>
            <person name="Vander Horn P.B."/>
            <person name="Backstrom A.D."/>
            <person name="Stewart V."/>
            <person name="Begley T.P."/>
        </authorList>
    </citation>
    <scope>NUCLEOTIDE SEQUENCE [GENOMIC DNA]</scope>
    <source>
        <strain>K12</strain>
    </source>
</reference>
<reference key="2">
    <citation type="journal article" date="1993" name="Nucleic Acids Res.">
        <title>Analysis of the Escherichia coli genome. IV. DNA sequence of the region from 89.2 to 92.8 minutes.</title>
        <authorList>
            <person name="Blattner F.R."/>
            <person name="Burland V.D."/>
            <person name="Plunkett G. III"/>
            <person name="Sofia H.J."/>
            <person name="Daniels D.L."/>
        </authorList>
    </citation>
    <scope>NUCLEOTIDE SEQUENCE [LARGE SCALE GENOMIC DNA]</scope>
    <source>
        <strain>K12 / MG1655 / ATCC 47076</strain>
    </source>
</reference>
<reference key="3">
    <citation type="journal article" date="1997" name="Science">
        <title>The complete genome sequence of Escherichia coli K-12.</title>
        <authorList>
            <person name="Blattner F.R."/>
            <person name="Plunkett G. III"/>
            <person name="Bloch C.A."/>
            <person name="Perna N.T."/>
            <person name="Burland V."/>
            <person name="Riley M."/>
            <person name="Collado-Vides J."/>
            <person name="Glasner J.D."/>
            <person name="Rode C.K."/>
            <person name="Mayhew G.F."/>
            <person name="Gregor J."/>
            <person name="Davis N.W."/>
            <person name="Kirkpatrick H.A."/>
            <person name="Goeden M.A."/>
            <person name="Rose D.J."/>
            <person name="Mau B."/>
            <person name="Shao Y."/>
        </authorList>
    </citation>
    <scope>NUCLEOTIDE SEQUENCE [LARGE SCALE GENOMIC DNA]</scope>
    <source>
        <strain>K12 / MG1655 / ATCC 47076</strain>
    </source>
</reference>
<reference key="4">
    <citation type="journal article" date="2006" name="Mol. Syst. Biol.">
        <title>Highly accurate genome sequences of Escherichia coli K-12 strains MG1655 and W3110.</title>
        <authorList>
            <person name="Hayashi K."/>
            <person name="Morooka N."/>
            <person name="Yamamoto Y."/>
            <person name="Fujita K."/>
            <person name="Isono K."/>
            <person name="Choi S."/>
            <person name="Ohtsubo E."/>
            <person name="Baba T."/>
            <person name="Wanner B.L."/>
            <person name="Mori H."/>
            <person name="Horiuchi T."/>
        </authorList>
    </citation>
    <scope>NUCLEOTIDE SEQUENCE [LARGE SCALE GENOMIC DNA]</scope>
    <source>
        <strain>K12 / W3110 / ATCC 27325 / DSM 5911</strain>
    </source>
</reference>
<reference key="5">
    <citation type="journal article" date="1998" name="J. Biol. Chem.">
        <title>Thiamin biosynthesis in Escherichia coli. Identification of ThiS thiocarboxylate as the immediate sulfur donor in the thiazole formation.</title>
        <authorList>
            <person name="Taylor S.V."/>
            <person name="Kelleher N.L."/>
            <person name="Kinsland C."/>
            <person name="Chiu H.-J."/>
            <person name="Costello C.A."/>
            <person name="Backstrom A.D."/>
            <person name="McLafferty F.W."/>
            <person name="Begley T.P."/>
        </authorList>
    </citation>
    <scope>CATALYTIC ACTIVITY</scope>
    <scope>REACTION PRODUCT</scope>
    <source>
        <strain>B/r / ATCC 12407</strain>
    </source>
</reference>
<reference key="6">
    <citation type="journal article" date="1998" name="Protein Sci.">
        <title>Efficient sequence analysis of the six gene products (7-74 kDa) from the Escherichia coli thiamin biosynthetic operon by tandem high-resolution mass spectrometry.</title>
        <authorList>
            <person name="Kelleher N.L."/>
            <person name="Taylor S.V."/>
            <person name="Grannis D."/>
            <person name="Kinsland C."/>
            <person name="Chiu H.-J."/>
            <person name="Begley T.P."/>
            <person name="McLafferty F.W."/>
        </authorList>
    </citation>
    <scope>MASS SPECTROMETRY</scope>
</reference>
<reference key="7">
    <citation type="journal article" date="2001" name="Proc. Natl. Acad. Sci. U.S.A.">
        <title>Biosynthesis of the thiazole moiety of thiamin in Escherichia coli: identification of an acyldisulfide-linked protein--protein conjugate that is functionally analogous to the ubiquitin/E1 complex.</title>
        <authorList>
            <person name="Xi J."/>
            <person name="Ge Y."/>
            <person name="Kinsland C."/>
            <person name="McLafferty F.W."/>
            <person name="Begley T.P."/>
        </authorList>
    </citation>
    <scope>CROSS-LINKING TO SULFUR CARRIER PROTEIN THIS</scope>
    <scope>MUTAGENESIS OF CYS-184</scope>
    <scope>REACTION MECHANISM</scope>
</reference>
<reference key="8">
    <citation type="journal article" date="2005" name="J. Mol. Biol.">
        <title>Structural analysis of Escherichia coli ThiF.</title>
        <authorList>
            <person name="Duda D.M."/>
            <person name="Walden H."/>
            <person name="Sfondouris J."/>
            <person name="Schulman B.A."/>
        </authorList>
    </citation>
    <scope>X-RAY CRYSTALLOGRAPHY (2.75 ANGSTROMS) IN COMPLEXES WITH ZINC WITH OR WITOUT ATP</scope>
    <scope>COFACTOR</scope>
    <scope>SUBUNIT</scope>
    <scope>MUTAGENESIS OF TRP-174</scope>
</reference>
<reference key="9">
    <citation type="journal article" date="2006" name="Biochemistry">
        <title>Structure of the Escherichia coli ThiS-ThiF complex, a key component of the sulfur transfer system in thiamin biosynthesis.</title>
        <authorList>
            <person name="Lehmann C."/>
            <person name="Begley T.P."/>
            <person name="Ealick S.E."/>
        </authorList>
    </citation>
    <scope>X-RAY CRYSTALLOGRAPHY (1.98 ANGSTROMS) IN COMPLEX WITH ZINC AND SULFUR CARRIER PROTEIN THIS</scope>
    <scope>COFACTOR</scope>
    <scope>REACTION MECHANISM</scope>
</reference>
<accession>P30138</accession>
<accession>P76780</accession>
<accession>Q2M8S9</accession>
<keyword id="KW-0002">3D-structure</keyword>
<keyword id="KW-0067">ATP-binding</keyword>
<keyword id="KW-0479">Metal-binding</keyword>
<keyword id="KW-0547">Nucleotide-binding</keyword>
<keyword id="KW-0548">Nucleotidyltransferase</keyword>
<keyword id="KW-1185">Reference proteome</keyword>
<keyword id="KW-0784">Thiamine biosynthesis</keyword>
<keyword id="KW-0882">Thioester bond</keyword>
<keyword id="KW-0808">Transferase</keyword>
<keyword id="KW-0862">Zinc</keyword>